<name>DEF_CHRFK</name>
<keyword id="KW-0378">Hydrolase</keyword>
<keyword id="KW-0408">Iron</keyword>
<keyword id="KW-0479">Metal-binding</keyword>
<keyword id="KW-0648">Protein biosynthesis</keyword>
<organism>
    <name type="scientific">Christiangramia forsetii (strain DSM 17595 / CGMCC 1.15422 / KT0803)</name>
    <name type="common">Gramella forsetii</name>
    <dbReference type="NCBI Taxonomy" id="411154"/>
    <lineage>
        <taxon>Bacteria</taxon>
        <taxon>Pseudomonadati</taxon>
        <taxon>Bacteroidota</taxon>
        <taxon>Flavobacteriia</taxon>
        <taxon>Flavobacteriales</taxon>
        <taxon>Flavobacteriaceae</taxon>
        <taxon>Christiangramia</taxon>
    </lineage>
</organism>
<gene>
    <name evidence="1" type="primary">def</name>
    <name type="ordered locus">GFO_2273</name>
</gene>
<comment type="function">
    <text evidence="1">Removes the formyl group from the N-terminal Met of newly synthesized proteins. Requires at least a dipeptide for an efficient rate of reaction. N-terminal L-methionine is a prerequisite for activity but the enzyme has broad specificity at other positions.</text>
</comment>
<comment type="catalytic activity">
    <reaction evidence="1">
        <text>N-terminal N-formyl-L-methionyl-[peptide] + H2O = N-terminal L-methionyl-[peptide] + formate</text>
        <dbReference type="Rhea" id="RHEA:24420"/>
        <dbReference type="Rhea" id="RHEA-COMP:10639"/>
        <dbReference type="Rhea" id="RHEA-COMP:10640"/>
        <dbReference type="ChEBI" id="CHEBI:15377"/>
        <dbReference type="ChEBI" id="CHEBI:15740"/>
        <dbReference type="ChEBI" id="CHEBI:49298"/>
        <dbReference type="ChEBI" id="CHEBI:64731"/>
        <dbReference type="EC" id="3.5.1.88"/>
    </reaction>
</comment>
<comment type="cofactor">
    <cofactor evidence="1">
        <name>Fe(2+)</name>
        <dbReference type="ChEBI" id="CHEBI:29033"/>
    </cofactor>
    <text evidence="1">Binds 1 Fe(2+) ion.</text>
</comment>
<comment type="similarity">
    <text evidence="1">Belongs to the polypeptide deformylase family.</text>
</comment>
<feature type="chain" id="PRO_0000301034" description="Peptide deformylase">
    <location>
        <begin position="1"/>
        <end position="196"/>
    </location>
</feature>
<feature type="active site" evidence="1">
    <location>
        <position position="148"/>
    </location>
</feature>
<feature type="binding site" evidence="1">
    <location>
        <position position="105"/>
    </location>
    <ligand>
        <name>Fe cation</name>
        <dbReference type="ChEBI" id="CHEBI:24875"/>
    </ligand>
</feature>
<feature type="binding site" evidence="1">
    <location>
        <position position="147"/>
    </location>
    <ligand>
        <name>Fe cation</name>
        <dbReference type="ChEBI" id="CHEBI:24875"/>
    </ligand>
</feature>
<feature type="binding site" evidence="1">
    <location>
        <position position="151"/>
    </location>
    <ligand>
        <name>Fe cation</name>
        <dbReference type="ChEBI" id="CHEBI:24875"/>
    </ligand>
</feature>
<proteinExistence type="inferred from homology"/>
<sequence length="196" mass="22661">MILPIIAYGDPVLKKKAKDIDKDYPKLEELINNMWDTMYNAYGVGLAAPQVGLPVRMFMIDPAPFADDEELDEAEKKVLMDLRKVFINPQIIEETGEEWAFSEGCLSIPEVREDVFRQPDITIEYHDENWEKHTETYSGLAARVIQHEYDHIEGILFTDKLSSLKKRLIKSKLANISKGKINVEYKMRFPNAKKAR</sequence>
<accession>A0M3P3</accession>
<reference key="1">
    <citation type="journal article" date="2006" name="Environ. Microbiol.">
        <title>Whole genome analysis of the marine Bacteroidetes'Gramella forsetii' reveals adaptations to degradation of polymeric organic matter.</title>
        <authorList>
            <person name="Bauer M."/>
            <person name="Kube M."/>
            <person name="Teeling H."/>
            <person name="Richter M."/>
            <person name="Lombardot T."/>
            <person name="Allers E."/>
            <person name="Wuerdemann C.A."/>
            <person name="Quast C."/>
            <person name="Kuhl H."/>
            <person name="Knaust F."/>
            <person name="Woebken D."/>
            <person name="Bischof K."/>
            <person name="Mussmann M."/>
            <person name="Choudhuri J.V."/>
            <person name="Meyer F."/>
            <person name="Reinhardt R."/>
            <person name="Amann R.I."/>
            <person name="Gloeckner F.O."/>
        </authorList>
    </citation>
    <scope>NUCLEOTIDE SEQUENCE [LARGE SCALE GENOMIC DNA]</scope>
    <source>
        <strain>DSM 17595 / CGMCC 1.15422 / KT0803</strain>
    </source>
</reference>
<evidence type="ECO:0000255" key="1">
    <source>
        <dbReference type="HAMAP-Rule" id="MF_00163"/>
    </source>
</evidence>
<protein>
    <recommendedName>
        <fullName evidence="1">Peptide deformylase</fullName>
        <shortName evidence="1">PDF</shortName>
        <ecNumber evidence="1">3.5.1.88</ecNumber>
    </recommendedName>
    <alternativeName>
        <fullName evidence="1">Polypeptide deformylase</fullName>
    </alternativeName>
</protein>
<dbReference type="EC" id="3.5.1.88" evidence="1"/>
<dbReference type="EMBL" id="CU207366">
    <property type="protein sequence ID" value="CAL67238.1"/>
    <property type="molecule type" value="Genomic_DNA"/>
</dbReference>
<dbReference type="RefSeq" id="WP_011710141.1">
    <property type="nucleotide sequence ID" value="NC_008571.1"/>
</dbReference>
<dbReference type="SMR" id="A0M3P3"/>
<dbReference type="STRING" id="411154.GFO_2273"/>
<dbReference type="KEGG" id="gfo:GFO_2273"/>
<dbReference type="eggNOG" id="COG0242">
    <property type="taxonomic scope" value="Bacteria"/>
</dbReference>
<dbReference type="HOGENOM" id="CLU_061901_2_0_10"/>
<dbReference type="OrthoDB" id="9784988at2"/>
<dbReference type="Proteomes" id="UP000000755">
    <property type="component" value="Chromosome"/>
</dbReference>
<dbReference type="GO" id="GO:0046872">
    <property type="term" value="F:metal ion binding"/>
    <property type="evidence" value="ECO:0007669"/>
    <property type="project" value="UniProtKB-KW"/>
</dbReference>
<dbReference type="GO" id="GO:0042586">
    <property type="term" value="F:peptide deformylase activity"/>
    <property type="evidence" value="ECO:0007669"/>
    <property type="project" value="UniProtKB-UniRule"/>
</dbReference>
<dbReference type="GO" id="GO:0043686">
    <property type="term" value="P:co-translational protein modification"/>
    <property type="evidence" value="ECO:0007669"/>
    <property type="project" value="TreeGrafter"/>
</dbReference>
<dbReference type="GO" id="GO:0006412">
    <property type="term" value="P:translation"/>
    <property type="evidence" value="ECO:0007669"/>
    <property type="project" value="UniProtKB-UniRule"/>
</dbReference>
<dbReference type="CDD" id="cd00487">
    <property type="entry name" value="Pep_deformylase"/>
    <property type="match status" value="1"/>
</dbReference>
<dbReference type="Gene3D" id="3.90.45.10">
    <property type="entry name" value="Peptide deformylase"/>
    <property type="match status" value="1"/>
</dbReference>
<dbReference type="HAMAP" id="MF_00163">
    <property type="entry name" value="Pep_deformylase"/>
    <property type="match status" value="1"/>
</dbReference>
<dbReference type="InterPro" id="IPR023635">
    <property type="entry name" value="Peptide_deformylase"/>
</dbReference>
<dbReference type="InterPro" id="IPR036821">
    <property type="entry name" value="Peptide_deformylase_sf"/>
</dbReference>
<dbReference type="NCBIfam" id="TIGR00079">
    <property type="entry name" value="pept_deformyl"/>
    <property type="match status" value="1"/>
</dbReference>
<dbReference type="NCBIfam" id="NF001159">
    <property type="entry name" value="PRK00150.1-3"/>
    <property type="match status" value="1"/>
</dbReference>
<dbReference type="PANTHER" id="PTHR10458">
    <property type="entry name" value="PEPTIDE DEFORMYLASE"/>
    <property type="match status" value="1"/>
</dbReference>
<dbReference type="PANTHER" id="PTHR10458:SF22">
    <property type="entry name" value="PEPTIDE DEFORMYLASE"/>
    <property type="match status" value="1"/>
</dbReference>
<dbReference type="Pfam" id="PF01327">
    <property type="entry name" value="Pep_deformylase"/>
    <property type="match status" value="1"/>
</dbReference>
<dbReference type="PIRSF" id="PIRSF004749">
    <property type="entry name" value="Pep_def"/>
    <property type="match status" value="1"/>
</dbReference>
<dbReference type="PRINTS" id="PR01576">
    <property type="entry name" value="PDEFORMYLASE"/>
</dbReference>
<dbReference type="SUPFAM" id="SSF56420">
    <property type="entry name" value="Peptide deformylase"/>
    <property type="match status" value="1"/>
</dbReference>